<reference key="1">
    <citation type="journal article" date="2019" name="Toxins">
        <title>The isolation of new pore-forming toxins from the sea anemone Actinia fragacea provides insights into the mechanisms of actinoporin evolution.</title>
        <authorList>
            <person name="Morante K."/>
            <person name="Bellomio A."/>
            <person name="Viguera A.R."/>
            <person name="Gonzalez-Manas J.M."/>
            <person name="Tsumoto K."/>
            <person name="Caaveiro J.M.M."/>
        </authorList>
    </citation>
    <scope>PROTEIN SEQUENCE</scope>
    <scope>FUNCTION</scope>
    <scope>MASS SPECTROMETRY</scope>
    <scope>BIOPHYSICOCHEMICAL PROPERTIES</scope>
</reference>
<protein>
    <recommendedName>
        <fullName evidence="6">DELTA-actitoxin-Afr1b</fullName>
        <shortName evidence="6">DELTA-AITX-Afr1b</shortName>
    </recommendedName>
    <alternativeName>
        <fullName evidence="1">Alpha-helical pore-forming toxin</fullName>
        <shortName evidence="1">PFT</shortName>
    </alternativeName>
    <alternativeName>
        <fullName evidence="1">Cytolysin</fullName>
    </alternativeName>
    <alternativeName>
        <fullName evidence="5">Fragaceatoxin A</fullName>
        <shortName evidence="5">fraA</shortName>
    </alternativeName>
</protein>
<comment type="function">
    <text evidence="1 4">Pore-forming toxin (PFT) that consists of a crown-shaped octamer or nonamer that forms cation-selective hydrophilic pores of about 1.5 nm (inside) and 13 nm (outside) and causes cytolysis (By similarity). It causes cardiac stimulation (By similarity). Also causes hemolysis (HC(50)=0.4 nM) (PubMed:31295915). Interestingly, the Phe-16 is crucial for hemolysis (By similarity). Pore formation is a multi-step process that involves specific recognition of membrane sphingomyelin (but neither cholesterol nor phosphatidylcholine) using aromatic rich region and adjacent phosphocholine (POC) binding site, firm binding to the membrane (mainly driven by hydrophobic interactions) accompanied by the transfer of the N-terminal region to the lipid-water interface and finally pore formation after oligomerization of monomers (By similarity). It is probable that a dimeric form is an assembly intermediate before the complete oligomerization (By similarity). The formation of stable pores occurs only in vesicles composed of DOPC/SM (there is no oligomerization when the PFT is treated with vesicles of DOPC or SM alone) (By similarity). The transmembrane pore displays 8 lateral perforations, one at each subunit-subunit interface, partially occupied by the acyl-chain region of a bridging lipid (By similarity). Each pore contains 24 lipid molecules, firmly bound to each subunit, that is, 3 lipids (L1, L2, L3, L4 and/or L5) are associated to each subunit (By similarity). Lipid L1 bridges 2 subunits, whereas lipids L2 and L3 bind to sites at single subunit (By similarity).</text>
</comment>
<comment type="biophysicochemical properties">
    <temperatureDependence>
        <text evidence="4">Stable up to about 65 degrees Celsius.</text>
    </temperatureDependence>
</comment>
<comment type="subunit">
    <text evidence="1">Octamer or nonamer in membranes. Monomer in the soluble state.</text>
</comment>
<comment type="subcellular location">
    <subcellularLocation>
        <location evidence="4">Secreted</location>
    </subcellularLocation>
    <subcellularLocation>
        <location evidence="2">Nematocyst</location>
    </subcellularLocation>
    <subcellularLocation>
        <location evidence="1">Target cell membrane</location>
    </subcellularLocation>
    <text evidence="1">Forms an alpha-helical membrane channel in the prey.</text>
</comment>
<comment type="domain">
    <text evidence="3">Composed of a long N-terminal alpha-helix and a core region rich in beta-sheet structures. Before the pore formation, the alpha-helix binds the lipid membrane, partitions into the lipid-water interface and stabilizes the monomeric molecule on the membrane. Finally, it traverses the bilayer, thus forming the transmembrane pore.</text>
</comment>
<comment type="mass spectrometry" mass="19728.0" error="3.0" method="Electrospray" evidence="4"/>
<comment type="miscellaneous">
    <text evidence="1">This protein has been found to bind carbohydrates, since it shows a substantial delay in elution profile in size-exclusion chromatography. The carbohydrate pocket ovelaps with the lipid-binding module of actinoporins.</text>
</comment>
<comment type="similarity">
    <text evidence="6">Belongs to the actinoporin family. Sea anemone subfamily.</text>
</comment>
<evidence type="ECO:0000250" key="1">
    <source>
        <dbReference type="UniProtKB" id="B9W5G6"/>
    </source>
</evidence>
<evidence type="ECO:0000250" key="2">
    <source>
        <dbReference type="UniProtKB" id="P07845"/>
    </source>
</evidence>
<evidence type="ECO:0000250" key="3">
    <source>
        <dbReference type="UniProtKB" id="P61914"/>
    </source>
</evidence>
<evidence type="ECO:0000269" key="4">
    <source>
    </source>
</evidence>
<evidence type="ECO:0000303" key="5">
    <source>
    </source>
</evidence>
<evidence type="ECO:0000305" key="6"/>
<evidence type="ECO:0000305" key="7">
    <source>
    </source>
</evidence>
<dbReference type="GO" id="GO:0005576">
    <property type="term" value="C:extracellular region"/>
    <property type="evidence" value="ECO:0007669"/>
    <property type="project" value="UniProtKB-SubCell"/>
</dbReference>
<dbReference type="GO" id="GO:0016020">
    <property type="term" value="C:membrane"/>
    <property type="evidence" value="ECO:0007669"/>
    <property type="project" value="UniProtKB-KW"/>
</dbReference>
<dbReference type="GO" id="GO:0042151">
    <property type="term" value="C:nematocyst"/>
    <property type="evidence" value="ECO:0007669"/>
    <property type="project" value="UniProtKB-SubCell"/>
</dbReference>
<dbReference type="GO" id="GO:0044218">
    <property type="term" value="C:other organism cell membrane"/>
    <property type="evidence" value="ECO:0007669"/>
    <property type="project" value="UniProtKB-KW"/>
</dbReference>
<dbReference type="GO" id="GO:0008289">
    <property type="term" value="F:lipid binding"/>
    <property type="evidence" value="ECO:0007669"/>
    <property type="project" value="UniProtKB-KW"/>
</dbReference>
<dbReference type="GO" id="GO:0090729">
    <property type="term" value="F:toxin activity"/>
    <property type="evidence" value="ECO:0007669"/>
    <property type="project" value="UniProtKB-KW"/>
</dbReference>
<dbReference type="GO" id="GO:0031640">
    <property type="term" value="P:killing of cells of another organism"/>
    <property type="evidence" value="ECO:0007669"/>
    <property type="project" value="UniProtKB-KW"/>
</dbReference>
<dbReference type="GO" id="GO:0006811">
    <property type="term" value="P:monoatomic ion transport"/>
    <property type="evidence" value="ECO:0007669"/>
    <property type="project" value="UniProtKB-KW"/>
</dbReference>
<keyword id="KW-0204">Cytolysis</keyword>
<keyword id="KW-0903">Direct protein sequencing</keyword>
<keyword id="KW-0406">Ion transport</keyword>
<keyword id="KW-0446">Lipid-binding</keyword>
<keyword id="KW-0472">Membrane</keyword>
<keyword id="KW-0166">Nematocyst</keyword>
<keyword id="KW-0964">Secreted</keyword>
<keyword id="KW-1052">Target cell membrane</keyword>
<keyword id="KW-1053">Target membrane</keyword>
<keyword id="KW-0800">Toxin</keyword>
<keyword id="KW-0812">Transmembrane</keyword>
<keyword id="KW-0813">Transport</keyword>
<feature type="chain" id="PRO_0000453822" description="DELTA-actitoxin-Afr1b" evidence="4">
    <location>
        <begin position="1"/>
        <end position="20" status="greater than"/>
    </location>
</feature>
<feature type="site" description="Part of the hydrophobic cavity (in subunit A) that receives Val-60 from the adjacent subunit (B); essential in hemolysis, since it is critical for pore formation in cholesterol-rich membrane cells (such as red blood cells)" evidence="1">
    <location>
        <position position="16"/>
    </location>
</feature>
<feature type="non-terminal residue" evidence="7">
    <location>
        <position position="20"/>
    </location>
</feature>
<accession>P0DUW8</accession>
<proteinExistence type="evidence at protein level"/>
<organism>
    <name type="scientific">Actinia fragacea</name>
    <name type="common">Strawberry anemone</name>
    <dbReference type="NCBI Taxonomy" id="396334"/>
    <lineage>
        <taxon>Eukaryota</taxon>
        <taxon>Metazoa</taxon>
        <taxon>Cnidaria</taxon>
        <taxon>Anthozoa</taxon>
        <taxon>Hexacorallia</taxon>
        <taxon>Actiniaria</taxon>
        <taxon>Actiniidae</taxon>
        <taxon>Actinia</taxon>
    </lineage>
</organism>
<name>ACTPA_ACTFR</name>
<sequence length="20" mass="2017">SAEVAGAVIEGAKLTFNVLQ</sequence>